<feature type="chain" id="PRO_0000198461" description="Ribonuclease P protein component">
    <location>
        <begin position="1"/>
        <end position="118"/>
    </location>
</feature>
<comment type="function">
    <text evidence="1">RNaseP catalyzes the removal of the 5'-leader sequence from pre-tRNA to produce the mature 5'-terminus. It can also cleave other RNA substrates such as 4.5S RNA. The protein component plays an auxiliary but essential role in vivo by binding to the 5'-leader sequence and broadening the substrate specificity of the ribozyme.</text>
</comment>
<comment type="catalytic activity">
    <reaction evidence="1">
        <text>Endonucleolytic cleavage of RNA, removing 5'-extranucleotides from tRNA precursor.</text>
        <dbReference type="EC" id="3.1.26.5"/>
    </reaction>
</comment>
<comment type="subunit">
    <text evidence="1">Consists of a catalytic RNA component (M1 or rnpB) and a protein subunit.</text>
</comment>
<comment type="similarity">
    <text evidence="1">Belongs to the RnpA family.</text>
</comment>
<dbReference type="EC" id="3.1.26.5" evidence="1"/>
<dbReference type="EMBL" id="AE016830">
    <property type="protein sequence ID" value="AAO82997.1"/>
    <property type="molecule type" value="Genomic_DNA"/>
</dbReference>
<dbReference type="RefSeq" id="NP_816927.1">
    <property type="nucleotide sequence ID" value="NC_004668.1"/>
</dbReference>
<dbReference type="RefSeq" id="WP_002356011.1">
    <property type="nucleotide sequence ID" value="NZ_KE136524.1"/>
</dbReference>
<dbReference type="SMR" id="Q82YV0"/>
<dbReference type="STRING" id="226185.EF_3332"/>
<dbReference type="EnsemblBacteria" id="AAO82997">
    <property type="protein sequence ID" value="AAO82997"/>
    <property type="gene ID" value="EF_3332"/>
</dbReference>
<dbReference type="GeneID" id="60892562"/>
<dbReference type="KEGG" id="efa:EF3332"/>
<dbReference type="PATRIC" id="fig|226185.45.peg.255"/>
<dbReference type="eggNOG" id="COG0594">
    <property type="taxonomic scope" value="Bacteria"/>
</dbReference>
<dbReference type="HOGENOM" id="CLU_117179_9_1_9"/>
<dbReference type="Proteomes" id="UP000001415">
    <property type="component" value="Chromosome"/>
</dbReference>
<dbReference type="GO" id="GO:0030677">
    <property type="term" value="C:ribonuclease P complex"/>
    <property type="evidence" value="ECO:0007669"/>
    <property type="project" value="TreeGrafter"/>
</dbReference>
<dbReference type="GO" id="GO:0042781">
    <property type="term" value="F:3'-tRNA processing endoribonuclease activity"/>
    <property type="evidence" value="ECO:0007669"/>
    <property type="project" value="TreeGrafter"/>
</dbReference>
<dbReference type="GO" id="GO:0004526">
    <property type="term" value="F:ribonuclease P activity"/>
    <property type="evidence" value="ECO:0007669"/>
    <property type="project" value="UniProtKB-UniRule"/>
</dbReference>
<dbReference type="GO" id="GO:0000049">
    <property type="term" value="F:tRNA binding"/>
    <property type="evidence" value="ECO:0007669"/>
    <property type="project" value="UniProtKB-UniRule"/>
</dbReference>
<dbReference type="GO" id="GO:0001682">
    <property type="term" value="P:tRNA 5'-leader removal"/>
    <property type="evidence" value="ECO:0007669"/>
    <property type="project" value="UniProtKB-UniRule"/>
</dbReference>
<dbReference type="FunFam" id="3.30.230.10:FF:000021">
    <property type="entry name" value="Ribonuclease P protein component"/>
    <property type="match status" value="1"/>
</dbReference>
<dbReference type="Gene3D" id="3.30.230.10">
    <property type="match status" value="1"/>
</dbReference>
<dbReference type="HAMAP" id="MF_00227">
    <property type="entry name" value="RNase_P"/>
    <property type="match status" value="1"/>
</dbReference>
<dbReference type="InterPro" id="IPR020568">
    <property type="entry name" value="Ribosomal_Su5_D2-typ_SF"/>
</dbReference>
<dbReference type="InterPro" id="IPR014721">
    <property type="entry name" value="Ribsml_uS5_D2-typ_fold_subgr"/>
</dbReference>
<dbReference type="InterPro" id="IPR000100">
    <property type="entry name" value="RNase_P"/>
</dbReference>
<dbReference type="InterPro" id="IPR020539">
    <property type="entry name" value="RNase_P_CS"/>
</dbReference>
<dbReference type="NCBIfam" id="TIGR00188">
    <property type="entry name" value="rnpA"/>
    <property type="match status" value="1"/>
</dbReference>
<dbReference type="PANTHER" id="PTHR33992">
    <property type="entry name" value="RIBONUCLEASE P PROTEIN COMPONENT"/>
    <property type="match status" value="1"/>
</dbReference>
<dbReference type="PANTHER" id="PTHR33992:SF1">
    <property type="entry name" value="RIBONUCLEASE P PROTEIN COMPONENT"/>
    <property type="match status" value="1"/>
</dbReference>
<dbReference type="Pfam" id="PF00825">
    <property type="entry name" value="Ribonuclease_P"/>
    <property type="match status" value="1"/>
</dbReference>
<dbReference type="SUPFAM" id="SSF54211">
    <property type="entry name" value="Ribosomal protein S5 domain 2-like"/>
    <property type="match status" value="1"/>
</dbReference>
<dbReference type="PROSITE" id="PS00648">
    <property type="entry name" value="RIBONUCLEASE_P"/>
    <property type="match status" value="1"/>
</dbReference>
<accession>Q82YV0</accession>
<protein>
    <recommendedName>
        <fullName evidence="1">Ribonuclease P protein component</fullName>
        <shortName evidence="1">RNase P protein</shortName>
        <shortName evidence="1">RNaseP protein</shortName>
        <ecNumber evidence="1">3.1.26.5</ecNumber>
    </recommendedName>
    <alternativeName>
        <fullName evidence="1">Protein C5</fullName>
    </alternativeName>
</protein>
<evidence type="ECO:0000255" key="1">
    <source>
        <dbReference type="HAMAP-Rule" id="MF_00227"/>
    </source>
</evidence>
<gene>
    <name evidence="1" type="primary">rnpA</name>
    <name type="ordered locus">EF_3332</name>
</gene>
<sequence length="118" mass="13592">MKKSYRVKKEKEFQQVFNKKQSCANRRFVVYVLEKPQQAHFRVGISVGKKIGNAVTRNAVKRKIRASLFQLKDRISPEIDFIVIARPGLEKLSSEEVKANLTHVLNLAKILDVREGIE</sequence>
<name>RNPA_ENTFA</name>
<keyword id="KW-0255">Endonuclease</keyword>
<keyword id="KW-0378">Hydrolase</keyword>
<keyword id="KW-0540">Nuclease</keyword>
<keyword id="KW-1185">Reference proteome</keyword>
<keyword id="KW-0694">RNA-binding</keyword>
<keyword id="KW-0819">tRNA processing</keyword>
<reference key="1">
    <citation type="journal article" date="2003" name="Science">
        <title>Role of mobile DNA in the evolution of vancomycin-resistant Enterococcus faecalis.</title>
        <authorList>
            <person name="Paulsen I.T."/>
            <person name="Banerjei L."/>
            <person name="Myers G.S.A."/>
            <person name="Nelson K.E."/>
            <person name="Seshadri R."/>
            <person name="Read T.D."/>
            <person name="Fouts D.E."/>
            <person name="Eisen J.A."/>
            <person name="Gill S.R."/>
            <person name="Heidelberg J.F."/>
            <person name="Tettelin H."/>
            <person name="Dodson R.J."/>
            <person name="Umayam L.A."/>
            <person name="Brinkac L.M."/>
            <person name="Beanan M.J."/>
            <person name="Daugherty S.C."/>
            <person name="DeBoy R.T."/>
            <person name="Durkin S.A."/>
            <person name="Kolonay J.F."/>
            <person name="Madupu R."/>
            <person name="Nelson W.C."/>
            <person name="Vamathevan J.J."/>
            <person name="Tran B."/>
            <person name="Upton J."/>
            <person name="Hansen T."/>
            <person name="Shetty J."/>
            <person name="Khouri H.M."/>
            <person name="Utterback T.R."/>
            <person name="Radune D."/>
            <person name="Ketchum K.A."/>
            <person name="Dougherty B.A."/>
            <person name="Fraser C.M."/>
        </authorList>
    </citation>
    <scope>NUCLEOTIDE SEQUENCE [LARGE SCALE GENOMIC DNA]</scope>
    <source>
        <strain>ATCC 700802 / V583</strain>
    </source>
</reference>
<proteinExistence type="inferred from homology"/>
<organism>
    <name type="scientific">Enterococcus faecalis (strain ATCC 700802 / V583)</name>
    <dbReference type="NCBI Taxonomy" id="226185"/>
    <lineage>
        <taxon>Bacteria</taxon>
        <taxon>Bacillati</taxon>
        <taxon>Bacillota</taxon>
        <taxon>Bacilli</taxon>
        <taxon>Lactobacillales</taxon>
        <taxon>Enterococcaceae</taxon>
        <taxon>Enterococcus</taxon>
    </lineage>
</organism>